<protein>
    <recommendedName>
        <fullName evidence="1">Small ribosomal subunit protein uS2</fullName>
    </recommendedName>
    <alternativeName>
        <fullName evidence="3">30S ribosomal protein S2</fullName>
    </alternativeName>
</protein>
<keyword id="KW-1185">Reference proteome</keyword>
<keyword id="KW-0687">Ribonucleoprotein</keyword>
<keyword id="KW-0689">Ribosomal protein</keyword>
<evidence type="ECO:0000255" key="1">
    <source>
        <dbReference type="HAMAP-Rule" id="MF_00291"/>
    </source>
</evidence>
<evidence type="ECO:0000256" key="2">
    <source>
        <dbReference type="SAM" id="MobiDB-lite"/>
    </source>
</evidence>
<evidence type="ECO:0000305" key="3"/>
<organism>
    <name type="scientific">Bacillus licheniformis (strain ATCC 14580 / DSM 13 / JCM 2505 / CCUG 7422 / NBRC 12200 / NCIMB 9375 / NCTC 10341 / NRRL NRS-1264 / Gibson 46)</name>
    <dbReference type="NCBI Taxonomy" id="279010"/>
    <lineage>
        <taxon>Bacteria</taxon>
        <taxon>Bacillati</taxon>
        <taxon>Bacillota</taxon>
        <taxon>Bacilli</taxon>
        <taxon>Bacillales</taxon>
        <taxon>Bacillaceae</taxon>
        <taxon>Bacillus</taxon>
    </lineage>
</organism>
<comment type="similarity">
    <text evidence="1">Belongs to the universal ribosomal protein uS2 family.</text>
</comment>
<dbReference type="EMBL" id="CP000002">
    <property type="protein sequence ID" value="AAU23405.1"/>
    <property type="molecule type" value="Genomic_DNA"/>
</dbReference>
<dbReference type="EMBL" id="AE017333">
    <property type="protein sequence ID" value="AAU40765.1"/>
    <property type="molecule type" value="Genomic_DNA"/>
</dbReference>
<dbReference type="RefSeq" id="WP_003181828.1">
    <property type="nucleotide sequence ID" value="NC_006322.1"/>
</dbReference>
<dbReference type="SMR" id="Q65JJ9"/>
<dbReference type="STRING" id="279010.BL01244"/>
<dbReference type="GeneID" id="92861537"/>
<dbReference type="KEGG" id="bld:BLi01870"/>
<dbReference type="KEGG" id="bli:BL01244"/>
<dbReference type="eggNOG" id="COG0052">
    <property type="taxonomic scope" value="Bacteria"/>
</dbReference>
<dbReference type="HOGENOM" id="CLU_040318_1_2_9"/>
<dbReference type="Proteomes" id="UP000000606">
    <property type="component" value="Chromosome"/>
</dbReference>
<dbReference type="GO" id="GO:0022627">
    <property type="term" value="C:cytosolic small ribosomal subunit"/>
    <property type="evidence" value="ECO:0007669"/>
    <property type="project" value="TreeGrafter"/>
</dbReference>
<dbReference type="GO" id="GO:0003735">
    <property type="term" value="F:structural constituent of ribosome"/>
    <property type="evidence" value="ECO:0007669"/>
    <property type="project" value="InterPro"/>
</dbReference>
<dbReference type="GO" id="GO:0006412">
    <property type="term" value="P:translation"/>
    <property type="evidence" value="ECO:0007669"/>
    <property type="project" value="UniProtKB-UniRule"/>
</dbReference>
<dbReference type="CDD" id="cd01425">
    <property type="entry name" value="RPS2"/>
    <property type="match status" value="1"/>
</dbReference>
<dbReference type="FunFam" id="1.10.287.610:FF:000001">
    <property type="entry name" value="30S ribosomal protein S2"/>
    <property type="match status" value="1"/>
</dbReference>
<dbReference type="Gene3D" id="3.40.50.10490">
    <property type="entry name" value="Glucose-6-phosphate isomerase like protein, domain 1"/>
    <property type="match status" value="1"/>
</dbReference>
<dbReference type="Gene3D" id="1.10.287.610">
    <property type="entry name" value="Helix hairpin bin"/>
    <property type="match status" value="1"/>
</dbReference>
<dbReference type="HAMAP" id="MF_00291_B">
    <property type="entry name" value="Ribosomal_uS2_B"/>
    <property type="match status" value="1"/>
</dbReference>
<dbReference type="InterPro" id="IPR001865">
    <property type="entry name" value="Ribosomal_uS2"/>
</dbReference>
<dbReference type="InterPro" id="IPR005706">
    <property type="entry name" value="Ribosomal_uS2_bac/mit/plastid"/>
</dbReference>
<dbReference type="InterPro" id="IPR018130">
    <property type="entry name" value="Ribosomal_uS2_CS"/>
</dbReference>
<dbReference type="InterPro" id="IPR023591">
    <property type="entry name" value="Ribosomal_uS2_flav_dom_sf"/>
</dbReference>
<dbReference type="NCBIfam" id="TIGR01011">
    <property type="entry name" value="rpsB_bact"/>
    <property type="match status" value="1"/>
</dbReference>
<dbReference type="PANTHER" id="PTHR12534">
    <property type="entry name" value="30S RIBOSOMAL PROTEIN S2 PROKARYOTIC AND ORGANELLAR"/>
    <property type="match status" value="1"/>
</dbReference>
<dbReference type="PANTHER" id="PTHR12534:SF0">
    <property type="entry name" value="SMALL RIBOSOMAL SUBUNIT PROTEIN US2M"/>
    <property type="match status" value="1"/>
</dbReference>
<dbReference type="Pfam" id="PF00318">
    <property type="entry name" value="Ribosomal_S2"/>
    <property type="match status" value="1"/>
</dbReference>
<dbReference type="PRINTS" id="PR00395">
    <property type="entry name" value="RIBOSOMALS2"/>
</dbReference>
<dbReference type="SUPFAM" id="SSF52313">
    <property type="entry name" value="Ribosomal protein S2"/>
    <property type="match status" value="1"/>
</dbReference>
<dbReference type="PROSITE" id="PS00962">
    <property type="entry name" value="RIBOSOMAL_S2_1"/>
    <property type="match status" value="1"/>
</dbReference>
<dbReference type="PROSITE" id="PS00963">
    <property type="entry name" value="RIBOSOMAL_S2_2"/>
    <property type="match status" value="1"/>
</dbReference>
<reference key="1">
    <citation type="journal article" date="2004" name="J. Mol. Microbiol. Biotechnol.">
        <title>The complete genome sequence of Bacillus licheniformis DSM13, an organism with great industrial potential.</title>
        <authorList>
            <person name="Veith B."/>
            <person name="Herzberg C."/>
            <person name="Steckel S."/>
            <person name="Feesche J."/>
            <person name="Maurer K.H."/>
            <person name="Ehrenreich P."/>
            <person name="Baeumer S."/>
            <person name="Henne A."/>
            <person name="Liesegang H."/>
            <person name="Merkl R."/>
            <person name="Ehrenreich A."/>
            <person name="Gottschalk G."/>
        </authorList>
    </citation>
    <scope>NUCLEOTIDE SEQUENCE [LARGE SCALE GENOMIC DNA]</scope>
    <source>
        <strain>ATCC 14580 / DSM 13 / JCM 2505 / CCUG 7422 / NBRC 12200 / NCIMB 9375 / NCTC 10341 / NRRL NRS-1264 / Gibson 46</strain>
    </source>
</reference>
<reference key="2">
    <citation type="journal article" date="2004" name="Genome Biol.">
        <title>Complete genome sequence of the industrial bacterium Bacillus licheniformis and comparisons with closely related Bacillus species.</title>
        <authorList>
            <person name="Rey M.W."/>
            <person name="Ramaiya P."/>
            <person name="Nelson B.A."/>
            <person name="Brody-Karpin S.D."/>
            <person name="Zaretsky E.J."/>
            <person name="Tang M."/>
            <person name="Lopez de Leon A."/>
            <person name="Xiang H."/>
            <person name="Gusti V."/>
            <person name="Clausen I.G."/>
            <person name="Olsen P.B."/>
            <person name="Rasmussen M.D."/>
            <person name="Andersen J.T."/>
            <person name="Joergensen P.L."/>
            <person name="Larsen T.S."/>
            <person name="Sorokin A."/>
            <person name="Bolotin A."/>
            <person name="Lapidus A."/>
            <person name="Galleron N."/>
            <person name="Ehrlich S.D."/>
            <person name="Berka R.M."/>
        </authorList>
    </citation>
    <scope>NUCLEOTIDE SEQUENCE [LARGE SCALE GENOMIC DNA]</scope>
    <source>
        <strain>ATCC 14580 / DSM 13 / JCM 2505 / CCUG 7422 / NBRC 12200 / NCIMB 9375 / NCTC 10341 / NRRL NRS-1264 / Gibson 46</strain>
    </source>
</reference>
<feature type="chain" id="PRO_1000003893" description="Small ribosomal subunit protein uS2">
    <location>
        <begin position="1"/>
        <end position="246"/>
    </location>
</feature>
<feature type="region of interest" description="Disordered" evidence="2">
    <location>
        <begin position="224"/>
        <end position="246"/>
    </location>
</feature>
<feature type="compositionally biased region" description="Basic and acidic residues" evidence="2">
    <location>
        <begin position="225"/>
        <end position="239"/>
    </location>
</feature>
<accession>Q65JJ9</accession>
<accession>Q62V04</accession>
<name>RS2_BACLD</name>
<proteinExistence type="inferred from homology"/>
<sequence length="246" mass="27973">MSVISMKQLLEAGVHFGHQTRRWNPKMKRYIFTERNGIYIIDLQKTVKKVEEAYNFTKNLAADGGKILFVGTKKQAQDSVKEEAERSGMYYVNQRWLGGTLTNFETIQKRIKRLKDIEKMQENGTFDVLPKKEVVQLKKELERLEKFLGGIKEMKELPDALFIIDPRKERIAVAEARKLNIPIIGIVDTNCDPDEIDVVIPANDDAIRAVKLLTSKMADAILEAKQGEESAETEAKEAETTETTTA</sequence>
<gene>
    <name evidence="1" type="primary">rpsB</name>
    <name type="ordered locus">BLi01870</name>
    <name type="ordered locus">BL01244</name>
</gene>